<feature type="chain" id="PRO_0000391886" description="E3 UFM1-protein ligase 1 homolog">
    <location>
        <begin position="1"/>
        <end position="782"/>
    </location>
</feature>
<feature type="region of interest" description="Disordered" evidence="2">
    <location>
        <begin position="405"/>
        <end position="478"/>
    </location>
</feature>
<sequence length="782" mass="87412">MGSDWDEIKRLAADFQKAQLTSTLQKLSERNCVEIVTLLLEKQMLEVVFTNDGKEYITPDHLEREIQDELYVNGGRANLVEVSKTLNVDLSRIEVLAERIAAENPSVHLVLGQLIDEDYISHIAQEINEKLVQRGEISISELASQFDLPSDFLQHDVVEKHLGKIIKGRQDASNPRVFFTQAYIQRCKAKIRGALAAITRPINVAVILQQIGVQEKIFHSLLDEIAPAGQVTSKQANSQYVPHIYAKTQADWVNSFYKQNSFLEYDAIQKLGISDAKSYIRKQFPNEEFLFLKRVALGARLVELTVVTALNECSATKQYLDLTTILPSNLSEEDIEEVFSTIMAQKHSNPSNFVYLDGIVFSQPYLAQLVQPCKALAESQAKAAIDGGVYQQYIVEKTLAQKGNVSTQELEDDGKVDKRDERRKKASSGKAGGGAQGRETKTKSTKKHQRGKAAAQFDSDDEDDVQQGTRGGGGASKKAVKPLELVKTADIVKLITASLEEEGLEHLSKPIAALYTNQFNQTALARAQELFEATPQTNRRQTHAAIQDRINTLLIDIRLYEKGLKLFPQDTQTQLVKYLLKSLGNEICNELSLYVASECNLTVKNTNLNVDQRNKLAQECEAQYRAALLEQNKALNKSIDEFELATETVLKSCSMIIKKVDKKKDRLLIADHKRKLQKQLLECHEPALLLHLAALILFTTITGSILHASGKFVSAILQHIRGSLNEEQNALLLRYHDLVLQVLQATPDSNESKLANEHLQAMQTQVVELAQNFSRASVSKAD</sequence>
<reference key="1">
    <citation type="journal article" date="2007" name="Nature">
        <title>Evolution of genes and genomes on the Drosophila phylogeny.</title>
        <authorList>
            <consortium name="Drosophila 12 genomes consortium"/>
        </authorList>
    </citation>
    <scope>NUCLEOTIDE SEQUENCE [LARGE SCALE GENOMIC DNA]</scope>
    <source>
        <strain>Rob3c / Tucson 14021-0248.25</strain>
    </source>
</reference>
<comment type="function">
    <text evidence="1">E3 UFM1-protein ligase that mediates ufmylation of target proteins.</text>
</comment>
<comment type="similarity">
    <text evidence="3">Belongs to the UFL1 family.</text>
</comment>
<evidence type="ECO:0000250" key="1">
    <source>
        <dbReference type="UniProtKB" id="O94874"/>
    </source>
</evidence>
<evidence type="ECO:0000256" key="2">
    <source>
        <dbReference type="SAM" id="MobiDB-lite"/>
    </source>
</evidence>
<evidence type="ECO:0000305" key="3"/>
<proteinExistence type="inferred from homology"/>
<dbReference type="EC" id="2.3.2.-"/>
<dbReference type="EMBL" id="CH480821">
    <property type="protein sequence ID" value="EDW55173.1"/>
    <property type="molecule type" value="Genomic_DNA"/>
</dbReference>
<dbReference type="SMR" id="B4I4N0"/>
<dbReference type="STRING" id="7238.B4I4N0"/>
<dbReference type="EnsemblMetazoa" id="FBtr0193499">
    <property type="protein sequence ID" value="FBpp0191991"/>
    <property type="gene ID" value="FBgn0165461"/>
</dbReference>
<dbReference type="EnsemblMetazoa" id="XM_002038600.2">
    <property type="protein sequence ID" value="XP_002038636.1"/>
    <property type="gene ID" value="LOC6614189"/>
</dbReference>
<dbReference type="GeneID" id="6614189"/>
<dbReference type="KEGG" id="dse:6614189"/>
<dbReference type="CTD" id="23376"/>
<dbReference type="HOGENOM" id="CLU_012417_1_1_1"/>
<dbReference type="OMA" id="CILHASG"/>
<dbReference type="OrthoDB" id="39018at7215"/>
<dbReference type="PhylomeDB" id="B4I4N0"/>
<dbReference type="ChiTaRS" id="eIF-3p66">
    <property type="organism name" value="fly"/>
</dbReference>
<dbReference type="Proteomes" id="UP000001292">
    <property type="component" value="Unassembled WGS sequence"/>
</dbReference>
<dbReference type="GO" id="GO:0005789">
    <property type="term" value="C:endoplasmic reticulum membrane"/>
    <property type="evidence" value="ECO:0007669"/>
    <property type="project" value="TreeGrafter"/>
</dbReference>
<dbReference type="GO" id="GO:0061666">
    <property type="term" value="F:UFM1 ligase activity"/>
    <property type="evidence" value="ECO:0007669"/>
    <property type="project" value="EnsemblMetazoa"/>
</dbReference>
<dbReference type="GO" id="GO:1990592">
    <property type="term" value="P:protein K69-linked ufmylation"/>
    <property type="evidence" value="ECO:0007669"/>
    <property type="project" value="TreeGrafter"/>
</dbReference>
<dbReference type="GO" id="GO:0032434">
    <property type="term" value="P:regulation of proteasomal ubiquitin-dependent protein catabolic process"/>
    <property type="evidence" value="ECO:0007669"/>
    <property type="project" value="TreeGrafter"/>
</dbReference>
<dbReference type="GO" id="GO:0034976">
    <property type="term" value="P:response to endoplasmic reticulum stress"/>
    <property type="evidence" value="ECO:0007669"/>
    <property type="project" value="TreeGrafter"/>
</dbReference>
<dbReference type="InterPro" id="IPR018611">
    <property type="entry name" value="Ufl1"/>
</dbReference>
<dbReference type="InterPro" id="IPR056761">
    <property type="entry name" value="Ufl1-like_C"/>
</dbReference>
<dbReference type="InterPro" id="IPR056580">
    <property type="entry name" value="Ufl1_dom"/>
</dbReference>
<dbReference type="InterPro" id="IPR056579">
    <property type="entry name" value="Ufl1_N"/>
</dbReference>
<dbReference type="PANTHER" id="PTHR31057">
    <property type="entry name" value="E3 UFM1-PROTEIN LIGASE 1"/>
    <property type="match status" value="1"/>
</dbReference>
<dbReference type="PANTHER" id="PTHR31057:SF0">
    <property type="entry name" value="E3 UFM1-PROTEIN LIGASE 1"/>
    <property type="match status" value="1"/>
</dbReference>
<dbReference type="Pfam" id="PF09743">
    <property type="entry name" value="E3_UFM1_ligase"/>
    <property type="match status" value="1"/>
</dbReference>
<dbReference type="Pfam" id="PF23659">
    <property type="entry name" value="UFL1"/>
    <property type="match status" value="1"/>
</dbReference>
<dbReference type="Pfam" id="PF25041">
    <property type="entry name" value="UFL1_C"/>
    <property type="match status" value="1"/>
</dbReference>
<gene>
    <name type="ORF">GM10514</name>
</gene>
<accession>B4I4N0</accession>
<protein>
    <recommendedName>
        <fullName>E3 UFM1-protein ligase 1 homolog</fullName>
        <ecNumber>2.3.2.-</ecNumber>
    </recommendedName>
    <alternativeName>
        <fullName evidence="3">E3 UFM1-protein transferase 1 homolog</fullName>
    </alternativeName>
</protein>
<name>UFL1_DROSE</name>
<keyword id="KW-1185">Reference proteome</keyword>
<keyword id="KW-0808">Transferase</keyword>
<keyword id="KW-0833">Ubl conjugation pathway</keyword>
<organism>
    <name type="scientific">Drosophila sechellia</name>
    <name type="common">Fruit fly</name>
    <dbReference type="NCBI Taxonomy" id="7238"/>
    <lineage>
        <taxon>Eukaryota</taxon>
        <taxon>Metazoa</taxon>
        <taxon>Ecdysozoa</taxon>
        <taxon>Arthropoda</taxon>
        <taxon>Hexapoda</taxon>
        <taxon>Insecta</taxon>
        <taxon>Pterygota</taxon>
        <taxon>Neoptera</taxon>
        <taxon>Endopterygota</taxon>
        <taxon>Diptera</taxon>
        <taxon>Brachycera</taxon>
        <taxon>Muscomorpha</taxon>
        <taxon>Ephydroidea</taxon>
        <taxon>Drosophilidae</taxon>
        <taxon>Drosophila</taxon>
        <taxon>Sophophora</taxon>
    </lineage>
</organism>